<reference key="1">
    <citation type="journal article" date="2002" name="Nature">
        <title>Genome sequence of the plant pathogen Ralstonia solanacearum.</title>
        <authorList>
            <person name="Salanoubat M."/>
            <person name="Genin S."/>
            <person name="Artiguenave F."/>
            <person name="Gouzy J."/>
            <person name="Mangenot S."/>
            <person name="Arlat M."/>
            <person name="Billault A."/>
            <person name="Brottier P."/>
            <person name="Camus J.-C."/>
            <person name="Cattolico L."/>
            <person name="Chandler M."/>
            <person name="Choisne N."/>
            <person name="Claudel-Renard C."/>
            <person name="Cunnac S."/>
            <person name="Demange N."/>
            <person name="Gaspin C."/>
            <person name="Lavie M."/>
            <person name="Moisan A."/>
            <person name="Robert C."/>
            <person name="Saurin W."/>
            <person name="Schiex T."/>
            <person name="Siguier P."/>
            <person name="Thebault P."/>
            <person name="Whalen M."/>
            <person name="Wincker P."/>
            <person name="Levy M."/>
            <person name="Weissenbach J."/>
            <person name="Boucher C.A."/>
        </authorList>
    </citation>
    <scope>NUCLEOTIDE SEQUENCE [LARGE SCALE GENOMIC DNA]</scope>
    <source>
        <strain>ATCC BAA-1114 / GMI1000</strain>
    </source>
</reference>
<feature type="chain" id="PRO_0000180171" description="Acyl carrier protein 1">
    <location>
        <begin position="1"/>
        <end position="79"/>
    </location>
</feature>
<feature type="domain" description="Carrier" evidence="2">
    <location>
        <begin position="2"/>
        <end position="77"/>
    </location>
</feature>
<feature type="modified residue" description="O-(pantetheine 4'-phosphoryl)serine" evidence="2">
    <location>
        <position position="37"/>
    </location>
</feature>
<gene>
    <name evidence="1" type="primary">acpP1</name>
    <name type="synonym">acpP</name>
    <name type="ordered locus">RSc1053</name>
    <name type="ORF">RS04175</name>
</gene>
<accession>Q8Y0J1</accession>
<name>ACP1_RALN1</name>
<proteinExistence type="inferred from homology"/>
<keyword id="KW-0963">Cytoplasm</keyword>
<keyword id="KW-0275">Fatty acid biosynthesis</keyword>
<keyword id="KW-0276">Fatty acid metabolism</keyword>
<keyword id="KW-0444">Lipid biosynthesis</keyword>
<keyword id="KW-0443">Lipid metabolism</keyword>
<keyword id="KW-0596">Phosphopantetheine</keyword>
<keyword id="KW-0597">Phosphoprotein</keyword>
<keyword id="KW-1185">Reference proteome</keyword>
<organism>
    <name type="scientific">Ralstonia nicotianae (strain ATCC BAA-1114 / GMI1000)</name>
    <name type="common">Ralstonia solanacearum</name>
    <dbReference type="NCBI Taxonomy" id="267608"/>
    <lineage>
        <taxon>Bacteria</taxon>
        <taxon>Pseudomonadati</taxon>
        <taxon>Pseudomonadota</taxon>
        <taxon>Betaproteobacteria</taxon>
        <taxon>Burkholderiales</taxon>
        <taxon>Burkholderiaceae</taxon>
        <taxon>Ralstonia</taxon>
        <taxon>Ralstonia solanacearum species complex</taxon>
    </lineage>
</organism>
<evidence type="ECO:0000255" key="1">
    <source>
        <dbReference type="HAMAP-Rule" id="MF_01217"/>
    </source>
</evidence>
<evidence type="ECO:0000255" key="2">
    <source>
        <dbReference type="PROSITE-ProRule" id="PRU00258"/>
    </source>
</evidence>
<dbReference type="EMBL" id="AL646052">
    <property type="protein sequence ID" value="CAD14755.1"/>
    <property type="molecule type" value="Genomic_DNA"/>
</dbReference>
<dbReference type="RefSeq" id="WP_003268817.1">
    <property type="nucleotide sequence ID" value="NC_003295.1"/>
</dbReference>
<dbReference type="SMR" id="Q8Y0J1"/>
<dbReference type="STRING" id="267608.RSc1053"/>
<dbReference type="EnsemblBacteria" id="CAD14755">
    <property type="protein sequence ID" value="CAD14755"/>
    <property type="gene ID" value="RSc1053"/>
</dbReference>
<dbReference type="GeneID" id="97321760"/>
<dbReference type="KEGG" id="rso:RSc1053"/>
<dbReference type="eggNOG" id="COG0236">
    <property type="taxonomic scope" value="Bacteria"/>
</dbReference>
<dbReference type="HOGENOM" id="CLU_108696_5_1_4"/>
<dbReference type="UniPathway" id="UPA00094"/>
<dbReference type="Proteomes" id="UP000001436">
    <property type="component" value="Chromosome"/>
</dbReference>
<dbReference type="GO" id="GO:0005829">
    <property type="term" value="C:cytosol"/>
    <property type="evidence" value="ECO:0007669"/>
    <property type="project" value="TreeGrafter"/>
</dbReference>
<dbReference type="GO" id="GO:0016020">
    <property type="term" value="C:membrane"/>
    <property type="evidence" value="ECO:0007669"/>
    <property type="project" value="GOC"/>
</dbReference>
<dbReference type="GO" id="GO:0000035">
    <property type="term" value="F:acyl binding"/>
    <property type="evidence" value="ECO:0007669"/>
    <property type="project" value="TreeGrafter"/>
</dbReference>
<dbReference type="GO" id="GO:0000036">
    <property type="term" value="F:acyl carrier activity"/>
    <property type="evidence" value="ECO:0007669"/>
    <property type="project" value="UniProtKB-UniRule"/>
</dbReference>
<dbReference type="GO" id="GO:0009245">
    <property type="term" value="P:lipid A biosynthetic process"/>
    <property type="evidence" value="ECO:0007669"/>
    <property type="project" value="TreeGrafter"/>
</dbReference>
<dbReference type="FunFam" id="1.10.1200.10:FF:000001">
    <property type="entry name" value="Acyl carrier protein"/>
    <property type="match status" value="1"/>
</dbReference>
<dbReference type="Gene3D" id="1.10.1200.10">
    <property type="entry name" value="ACP-like"/>
    <property type="match status" value="1"/>
</dbReference>
<dbReference type="HAMAP" id="MF_01217">
    <property type="entry name" value="Acyl_carrier"/>
    <property type="match status" value="1"/>
</dbReference>
<dbReference type="InterPro" id="IPR003231">
    <property type="entry name" value="ACP"/>
</dbReference>
<dbReference type="InterPro" id="IPR036736">
    <property type="entry name" value="ACP-like_sf"/>
</dbReference>
<dbReference type="InterPro" id="IPR009081">
    <property type="entry name" value="PP-bd_ACP"/>
</dbReference>
<dbReference type="InterPro" id="IPR006162">
    <property type="entry name" value="Ppantetheine_attach_site"/>
</dbReference>
<dbReference type="NCBIfam" id="TIGR00517">
    <property type="entry name" value="acyl_carrier"/>
    <property type="match status" value="1"/>
</dbReference>
<dbReference type="NCBIfam" id="NF002148">
    <property type="entry name" value="PRK00982.1-2"/>
    <property type="match status" value="1"/>
</dbReference>
<dbReference type="NCBIfam" id="NF002149">
    <property type="entry name" value="PRK00982.1-3"/>
    <property type="match status" value="1"/>
</dbReference>
<dbReference type="NCBIfam" id="NF002150">
    <property type="entry name" value="PRK00982.1-4"/>
    <property type="match status" value="1"/>
</dbReference>
<dbReference type="NCBIfam" id="NF002151">
    <property type="entry name" value="PRK00982.1-5"/>
    <property type="match status" value="1"/>
</dbReference>
<dbReference type="PANTHER" id="PTHR20863">
    <property type="entry name" value="ACYL CARRIER PROTEIN"/>
    <property type="match status" value="1"/>
</dbReference>
<dbReference type="PANTHER" id="PTHR20863:SF76">
    <property type="entry name" value="CARRIER DOMAIN-CONTAINING PROTEIN"/>
    <property type="match status" value="1"/>
</dbReference>
<dbReference type="Pfam" id="PF00550">
    <property type="entry name" value="PP-binding"/>
    <property type="match status" value="1"/>
</dbReference>
<dbReference type="SUPFAM" id="SSF47336">
    <property type="entry name" value="ACP-like"/>
    <property type="match status" value="1"/>
</dbReference>
<dbReference type="PROSITE" id="PS50075">
    <property type="entry name" value="CARRIER"/>
    <property type="match status" value="1"/>
</dbReference>
<dbReference type="PROSITE" id="PS00012">
    <property type="entry name" value="PHOSPHOPANTETHEINE"/>
    <property type="match status" value="1"/>
</dbReference>
<sequence length="79" mass="8714">MDNIEQRVKKIVAEQLGVAEADIKNESSFVNDLGADSLDTVELVMALEDEFGMEIPDEEAEKITTVQQAIDYARANVKA</sequence>
<comment type="function">
    <text evidence="1">Carrier of the growing fatty acid chain in fatty acid biosynthesis.</text>
</comment>
<comment type="pathway">
    <text evidence="1">Lipid metabolism; fatty acid biosynthesis.</text>
</comment>
<comment type="subcellular location">
    <subcellularLocation>
        <location evidence="1">Cytoplasm</location>
    </subcellularLocation>
</comment>
<comment type="PTM">
    <text evidence="1">4'-phosphopantetheine is transferred from CoA to a specific serine of apo-ACP by AcpS. This modification is essential for activity because fatty acids are bound in thioester linkage to the sulfhydryl of the prosthetic group.</text>
</comment>
<comment type="similarity">
    <text evidence="1">Belongs to the acyl carrier protein (ACP) family.</text>
</comment>
<protein>
    <recommendedName>
        <fullName evidence="1">Acyl carrier protein 1</fullName>
        <shortName evidence="1">ACP 1</shortName>
    </recommendedName>
</protein>